<protein>
    <recommendedName>
        <fullName evidence="1">Methionyl-tRNA formyltransferase</fullName>
        <ecNumber evidence="1">2.1.2.9</ecNumber>
    </recommendedName>
</protein>
<name>FMT_PARD8</name>
<comment type="function">
    <text evidence="1">Attaches a formyl group to the free amino group of methionyl-tRNA(fMet). The formyl group appears to play a dual role in the initiator identity of N-formylmethionyl-tRNA by promoting its recognition by IF2 and preventing the misappropriation of this tRNA by the elongation apparatus.</text>
</comment>
<comment type="catalytic activity">
    <reaction evidence="1">
        <text>L-methionyl-tRNA(fMet) + (6R)-10-formyltetrahydrofolate = N-formyl-L-methionyl-tRNA(fMet) + (6S)-5,6,7,8-tetrahydrofolate + H(+)</text>
        <dbReference type="Rhea" id="RHEA:24380"/>
        <dbReference type="Rhea" id="RHEA-COMP:9952"/>
        <dbReference type="Rhea" id="RHEA-COMP:9953"/>
        <dbReference type="ChEBI" id="CHEBI:15378"/>
        <dbReference type="ChEBI" id="CHEBI:57453"/>
        <dbReference type="ChEBI" id="CHEBI:78530"/>
        <dbReference type="ChEBI" id="CHEBI:78844"/>
        <dbReference type="ChEBI" id="CHEBI:195366"/>
        <dbReference type="EC" id="2.1.2.9"/>
    </reaction>
</comment>
<comment type="similarity">
    <text evidence="1">Belongs to the Fmt family.</text>
</comment>
<feature type="chain" id="PRO_1000020117" description="Methionyl-tRNA formyltransferase">
    <location>
        <begin position="1"/>
        <end position="324"/>
    </location>
</feature>
<feature type="binding site" evidence="1">
    <location>
        <begin position="114"/>
        <end position="117"/>
    </location>
    <ligand>
        <name>(6S)-5,6,7,8-tetrahydrofolate</name>
        <dbReference type="ChEBI" id="CHEBI:57453"/>
    </ligand>
</feature>
<keyword id="KW-0648">Protein biosynthesis</keyword>
<keyword id="KW-1185">Reference proteome</keyword>
<keyword id="KW-0808">Transferase</keyword>
<proteinExistence type="inferred from homology"/>
<dbReference type="EC" id="2.1.2.9" evidence="1"/>
<dbReference type="EMBL" id="CP000140">
    <property type="protein sequence ID" value="ABR43489.1"/>
    <property type="molecule type" value="Genomic_DNA"/>
</dbReference>
<dbReference type="RefSeq" id="WP_008779522.1">
    <property type="nucleotide sequence ID" value="NC_009615.1"/>
</dbReference>
<dbReference type="SMR" id="A6LCS5"/>
<dbReference type="STRING" id="435591.BDI_1742"/>
<dbReference type="PaxDb" id="435591-BDI_1742"/>
<dbReference type="KEGG" id="pdi:BDI_1742"/>
<dbReference type="eggNOG" id="COG0223">
    <property type="taxonomic scope" value="Bacteria"/>
</dbReference>
<dbReference type="HOGENOM" id="CLU_033347_1_1_10"/>
<dbReference type="BioCyc" id="PDIS435591:G1G5A-1793-MONOMER"/>
<dbReference type="Proteomes" id="UP000000566">
    <property type="component" value="Chromosome"/>
</dbReference>
<dbReference type="GO" id="GO:0005829">
    <property type="term" value="C:cytosol"/>
    <property type="evidence" value="ECO:0007669"/>
    <property type="project" value="TreeGrafter"/>
</dbReference>
<dbReference type="GO" id="GO:0004479">
    <property type="term" value="F:methionyl-tRNA formyltransferase activity"/>
    <property type="evidence" value="ECO:0007669"/>
    <property type="project" value="UniProtKB-UniRule"/>
</dbReference>
<dbReference type="CDD" id="cd08646">
    <property type="entry name" value="FMT_core_Met-tRNA-FMT_N"/>
    <property type="match status" value="1"/>
</dbReference>
<dbReference type="CDD" id="cd08704">
    <property type="entry name" value="Met_tRNA_FMT_C"/>
    <property type="match status" value="1"/>
</dbReference>
<dbReference type="Gene3D" id="3.40.50.12230">
    <property type="match status" value="1"/>
</dbReference>
<dbReference type="HAMAP" id="MF_00182">
    <property type="entry name" value="Formyl_trans"/>
    <property type="match status" value="1"/>
</dbReference>
<dbReference type="InterPro" id="IPR005794">
    <property type="entry name" value="Fmt"/>
</dbReference>
<dbReference type="InterPro" id="IPR005793">
    <property type="entry name" value="Formyl_trans_C"/>
</dbReference>
<dbReference type="InterPro" id="IPR002376">
    <property type="entry name" value="Formyl_transf_N"/>
</dbReference>
<dbReference type="InterPro" id="IPR036477">
    <property type="entry name" value="Formyl_transf_N_sf"/>
</dbReference>
<dbReference type="InterPro" id="IPR011034">
    <property type="entry name" value="Formyl_transferase-like_C_sf"/>
</dbReference>
<dbReference type="InterPro" id="IPR044135">
    <property type="entry name" value="Met-tRNA-FMT_C"/>
</dbReference>
<dbReference type="InterPro" id="IPR041711">
    <property type="entry name" value="Met-tRNA-FMT_N"/>
</dbReference>
<dbReference type="NCBIfam" id="TIGR00460">
    <property type="entry name" value="fmt"/>
    <property type="match status" value="1"/>
</dbReference>
<dbReference type="PANTHER" id="PTHR11138">
    <property type="entry name" value="METHIONYL-TRNA FORMYLTRANSFERASE"/>
    <property type="match status" value="1"/>
</dbReference>
<dbReference type="PANTHER" id="PTHR11138:SF5">
    <property type="entry name" value="METHIONYL-TRNA FORMYLTRANSFERASE, MITOCHONDRIAL"/>
    <property type="match status" value="1"/>
</dbReference>
<dbReference type="Pfam" id="PF02911">
    <property type="entry name" value="Formyl_trans_C"/>
    <property type="match status" value="1"/>
</dbReference>
<dbReference type="Pfam" id="PF00551">
    <property type="entry name" value="Formyl_trans_N"/>
    <property type="match status" value="1"/>
</dbReference>
<dbReference type="SUPFAM" id="SSF50486">
    <property type="entry name" value="FMT C-terminal domain-like"/>
    <property type="match status" value="1"/>
</dbReference>
<dbReference type="SUPFAM" id="SSF53328">
    <property type="entry name" value="Formyltransferase"/>
    <property type="match status" value="1"/>
</dbReference>
<reference key="1">
    <citation type="journal article" date="2007" name="PLoS Biol.">
        <title>Evolution of symbiotic bacteria in the distal human intestine.</title>
        <authorList>
            <person name="Xu J."/>
            <person name="Mahowald M.A."/>
            <person name="Ley R.E."/>
            <person name="Lozupone C.A."/>
            <person name="Hamady M."/>
            <person name="Martens E.C."/>
            <person name="Henrissat B."/>
            <person name="Coutinho P.M."/>
            <person name="Minx P."/>
            <person name="Latreille P."/>
            <person name="Cordum H."/>
            <person name="Van Brunt A."/>
            <person name="Kim K."/>
            <person name="Fulton R.S."/>
            <person name="Fulton L.A."/>
            <person name="Clifton S.W."/>
            <person name="Wilson R.K."/>
            <person name="Knight R.D."/>
            <person name="Gordon J.I."/>
        </authorList>
    </citation>
    <scope>NUCLEOTIDE SEQUENCE [LARGE SCALE GENOMIC DNA]</scope>
    <source>
        <strain>ATCC 8503 / DSM 20701 / CIP 104284 / JCM 5825 / NCTC 11152</strain>
    </source>
</reference>
<accession>A6LCS5</accession>
<gene>
    <name evidence="1" type="primary">fmt</name>
    <name type="ordered locus">BDI_1742</name>
</gene>
<evidence type="ECO:0000255" key="1">
    <source>
        <dbReference type="HAMAP-Rule" id="MF_00182"/>
    </source>
</evidence>
<sequence>MKKEDLRIVYMGTPDFAVESLRALVEGGYNVVGVITMPDKPMGRHGSVLQPSAVKQYAVSVGLPVLQPEKLKDEAFLEELRALRADLQIVVAFRMLPEVVWNMPRLGTFNLHASLLPQYRGAAPINWAVINGDTETGVTTFFLTHEIDTGKIIRQRHLPIADTDDVETVHDALMAMGARLVTETVDLLLDGKTDAIPQEEFYKDAAELRPAPKIFKDTCHIDWNQPVKNIYDFVRGLSPYPAAWTELISEDGKRLALKIYQAEKRPAEHNFPVGSIHTDHKSYIDVAVKDGFLRLRSLQLAGKKRMNITDFLNGFKQIAEYTVG</sequence>
<organism>
    <name type="scientific">Parabacteroides distasonis (strain ATCC 8503 / DSM 20701 / CIP 104284 / JCM 5825 / NCTC 11152)</name>
    <dbReference type="NCBI Taxonomy" id="435591"/>
    <lineage>
        <taxon>Bacteria</taxon>
        <taxon>Pseudomonadati</taxon>
        <taxon>Bacteroidota</taxon>
        <taxon>Bacteroidia</taxon>
        <taxon>Bacteroidales</taxon>
        <taxon>Tannerellaceae</taxon>
        <taxon>Parabacteroides</taxon>
    </lineage>
</organism>